<keyword id="KW-1003">Cell membrane</keyword>
<keyword id="KW-0472">Membrane</keyword>
<keyword id="KW-0812">Transmembrane</keyword>
<keyword id="KW-1133">Transmembrane helix</keyword>
<keyword id="KW-0813">Transport</keyword>
<organism>
    <name type="scientific">Aspergillus flavus (strain ATCC 200026 / FGSC A1120 / IAM 13836 / NRRL 3357 / JCM 12722 / SRRC 167)</name>
    <dbReference type="NCBI Taxonomy" id="332952"/>
    <lineage>
        <taxon>Eukaryota</taxon>
        <taxon>Fungi</taxon>
        <taxon>Dikarya</taxon>
        <taxon>Ascomycota</taxon>
        <taxon>Pezizomycotina</taxon>
        <taxon>Eurotiomycetes</taxon>
        <taxon>Eurotiomycetidae</taxon>
        <taxon>Eurotiales</taxon>
        <taxon>Aspergillaceae</taxon>
        <taxon>Aspergillus</taxon>
        <taxon>Aspergillus subgen. Circumdati</taxon>
    </lineage>
</organism>
<name>ASAE_ASPFN</name>
<evidence type="ECO:0000255" key="1"/>
<evidence type="ECO:0000256" key="2">
    <source>
        <dbReference type="SAM" id="MobiDB-lite"/>
    </source>
</evidence>
<evidence type="ECO:0000269" key="3">
    <source>
    </source>
</evidence>
<evidence type="ECO:0000269" key="4">
    <source>
    </source>
</evidence>
<evidence type="ECO:0000303" key="5">
    <source>
    </source>
</evidence>
<evidence type="ECO:0000305" key="6"/>
<evidence type="ECO:0000305" key="7">
    <source>
    </source>
</evidence>
<sequence>MDRSRTSSQGRDVLPPRGDEGRISPSLDKEKSPGPEDQPDAPPDGGLTAWLVVVGAWCTSFCSFGWVNSVGIFQNYYESHLLKHLSSSTISWIPSLQIFFMFAMGPIVGKLYDTFGARYLIIGGTFFHVFGLMMASISTQYYQLLLSQGICSAIGAAAIFQPALSAVSAWFNRKRGIAFATLSTGSSVGGVIFPIMVDRLIAKVGFGWSMRISAFMILFLLGIAIVTVKARRPPPQGPKPSGVQLLQPFKEPVFIVTLLGYMLLTYGVFIPINYVIVQAVASGMNADLASYLVPMLNGASLFGRLGAGFMSDRYGRYNIFIVMCIVAGVLVLALWIPATSNAPIIVFATLFGFASGAYVSLSPALIAQISPLKEVGYRTGLLFLFASVGGLTTSPIAGAILQNAGGDYTHMKIFSGVMLLGGTAFIITARIVGTGLKLVVKY</sequence>
<protein>
    <recommendedName>
        <fullName evidence="5">MFS transporter asaE</fullName>
    </recommendedName>
    <alternativeName>
        <fullName evidence="5">Aspergillic acid biosynthesis cluster protein E</fullName>
    </alternativeName>
</protein>
<gene>
    <name evidence="5" type="primary">asaE</name>
    <name type="ORF">AFLA_023050</name>
</gene>
<reference key="1">
    <citation type="journal article" date="2015" name="Genome Announc.">
        <title>Genome sequence of Aspergillus flavus NRRL 3357, a strain that causes aflatoxin contamination of food and feed.</title>
        <authorList>
            <person name="Nierman W.C."/>
            <person name="Yu J."/>
            <person name="Fedorova-Abrams N.D."/>
            <person name="Losada L."/>
            <person name="Cleveland T.E."/>
            <person name="Bhatnagar D."/>
            <person name="Bennett J.W."/>
            <person name="Dean R."/>
            <person name="Payne G.A."/>
        </authorList>
    </citation>
    <scope>NUCLEOTIDE SEQUENCE [LARGE SCALE GENOMIC DNA]</scope>
    <source>
        <strain>ATCC 200026 / FGSC A1120 / IAM 13836 / NRRL 3357 / JCM 12722 / SRRC 167</strain>
    </source>
</reference>
<reference key="2">
    <citation type="journal article" date="2013" name="Mol. Plant Pathol.">
        <title>Localization, morphology and transcriptional profile of Aspergillus flavus during seed colonization.</title>
        <authorList>
            <person name="Dolezal A.L."/>
            <person name="Obrian G.R."/>
            <person name="Nielsen D.M."/>
            <person name="Woloshuk C.P."/>
            <person name="Boston R.S."/>
            <person name="Payne G.A."/>
        </authorList>
    </citation>
    <scope>IDENTIFICATION WITHIN THE CLUSTER</scope>
    <scope>INDUCTION</scope>
</reference>
<reference key="3">
    <citation type="journal article" date="2018" name="Fungal Genet. Biol.">
        <title>Identification and functional analysis of the aspergillic acid gene cluster in Aspergillus flavus.</title>
        <authorList>
            <person name="Lebar M.D."/>
            <person name="Cary J.W."/>
            <person name="Majumdar R."/>
            <person name="Carter-Wientjes C.H."/>
            <person name="Mack B.M."/>
            <person name="Wei Q."/>
            <person name="Uka V."/>
            <person name="De Saeger S."/>
            <person name="Diana Di Mavungu J."/>
        </authorList>
    </citation>
    <scope>FUNCTION</scope>
    <scope>DISRUPTION PHENOTYPE</scope>
    <scope>PATHWAY</scope>
</reference>
<accession>B8N0F1</accession>
<feature type="chain" id="PRO_0000444460" description="MFS transporter asaE">
    <location>
        <begin position="1"/>
        <end position="442"/>
    </location>
</feature>
<feature type="transmembrane region" description="Helical" evidence="1">
    <location>
        <begin position="47"/>
        <end position="67"/>
    </location>
</feature>
<feature type="transmembrane region" description="Helical" evidence="1">
    <location>
        <begin position="89"/>
        <end position="109"/>
    </location>
</feature>
<feature type="transmembrane region" description="Helical" evidence="1">
    <location>
        <begin position="119"/>
        <end position="139"/>
    </location>
</feature>
<feature type="transmembrane region" description="Helical" evidence="1">
    <location>
        <begin position="150"/>
        <end position="170"/>
    </location>
</feature>
<feature type="transmembrane region" description="Helical" evidence="1">
    <location>
        <begin position="177"/>
        <end position="197"/>
    </location>
</feature>
<feature type="transmembrane region" description="Helical" evidence="1">
    <location>
        <begin position="206"/>
        <end position="226"/>
    </location>
</feature>
<feature type="transmembrane region" description="Helical" evidence="1">
    <location>
        <begin position="252"/>
        <end position="272"/>
    </location>
</feature>
<feature type="transmembrane region" description="Helical" evidence="1">
    <location>
        <begin position="288"/>
        <end position="307"/>
    </location>
</feature>
<feature type="transmembrane region" description="Helical" evidence="1">
    <location>
        <begin position="319"/>
        <end position="339"/>
    </location>
</feature>
<feature type="transmembrane region" description="Helical" evidence="1">
    <location>
        <begin position="342"/>
        <end position="362"/>
    </location>
</feature>
<feature type="transmembrane region" description="Helical" evidence="1">
    <location>
        <begin position="381"/>
        <end position="401"/>
    </location>
</feature>
<feature type="transmembrane region" description="Helical" evidence="1">
    <location>
        <begin position="413"/>
        <end position="433"/>
    </location>
</feature>
<feature type="region of interest" description="Disordered" evidence="2">
    <location>
        <begin position="1"/>
        <end position="43"/>
    </location>
</feature>
<feature type="compositionally biased region" description="Polar residues" evidence="2">
    <location>
        <begin position="1"/>
        <end position="10"/>
    </location>
</feature>
<feature type="compositionally biased region" description="Basic and acidic residues" evidence="2">
    <location>
        <begin position="17"/>
        <end position="34"/>
    </location>
</feature>
<comment type="function">
    <text evidence="4">MFS transporter; part of the gene cluster that mediates the biosynthesis of aspergillic acid (PubMed:29674152). Probably involved in aspergillic acid metabolism and transport (PubMed:29674152).</text>
</comment>
<comment type="pathway">
    <text evidence="4">Secondary metabolite biosynthesis.</text>
</comment>
<comment type="subcellular location">
    <subcellularLocation>
        <location evidence="7">Cell membrane</location>
        <topology evidence="1">Multi-pass membrane protein</topology>
    </subcellularLocation>
</comment>
<comment type="induction">
    <text evidence="3">Expressed during the earliest stages of maize kernel infection (PubMed:23834374).</text>
</comment>
<comment type="disruption phenotype">
    <text evidence="4">Leads to the production of a mixture of ferriaspergillin analogs with varying combinations of aspergillic acid and hydroxyaspergillic acid (PubMed:29674152).</text>
</comment>
<comment type="similarity">
    <text evidence="6">Belongs to the major facilitator superfamily. Monocarboxylate porter (TC 2.A.1.13) family.</text>
</comment>
<dbReference type="EMBL" id="EQ963473">
    <property type="protein sequence ID" value="EED55034.1"/>
    <property type="molecule type" value="Genomic_DNA"/>
</dbReference>
<dbReference type="RefSeq" id="XP_002373816.1">
    <property type="nucleotide sequence ID" value="XM_002373775.1"/>
</dbReference>
<dbReference type="SMR" id="B8N0F1"/>
<dbReference type="EnsemblFungi" id="EED55034">
    <property type="protein sequence ID" value="EED55034"/>
    <property type="gene ID" value="AFLA_023050"/>
</dbReference>
<dbReference type="VEuPathDB" id="FungiDB:AFLA_000141"/>
<dbReference type="eggNOG" id="KOG2504">
    <property type="taxonomic scope" value="Eukaryota"/>
</dbReference>
<dbReference type="HOGENOM" id="CLU_001265_1_0_1"/>
<dbReference type="OMA" id="YGRYNIF"/>
<dbReference type="GO" id="GO:0005886">
    <property type="term" value="C:plasma membrane"/>
    <property type="evidence" value="ECO:0007669"/>
    <property type="project" value="UniProtKB-SubCell"/>
</dbReference>
<dbReference type="GO" id="GO:0022857">
    <property type="term" value="F:transmembrane transporter activity"/>
    <property type="evidence" value="ECO:0007669"/>
    <property type="project" value="InterPro"/>
</dbReference>
<dbReference type="CDD" id="cd17352">
    <property type="entry name" value="MFS_MCT_SLC16"/>
    <property type="match status" value="1"/>
</dbReference>
<dbReference type="Gene3D" id="1.20.1250.20">
    <property type="entry name" value="MFS general substrate transporter like domains"/>
    <property type="match status" value="2"/>
</dbReference>
<dbReference type="InterPro" id="IPR011701">
    <property type="entry name" value="MFS"/>
</dbReference>
<dbReference type="InterPro" id="IPR020846">
    <property type="entry name" value="MFS_dom"/>
</dbReference>
<dbReference type="InterPro" id="IPR036259">
    <property type="entry name" value="MFS_trans_sf"/>
</dbReference>
<dbReference type="InterPro" id="IPR050327">
    <property type="entry name" value="Proton-linked_MCT"/>
</dbReference>
<dbReference type="PANTHER" id="PTHR11360:SF224">
    <property type="entry name" value="MAJOR FACILITATOR SUPERFAMILY (MFS) PROFILE DOMAIN-CONTAINING PROTEIN-RELATED"/>
    <property type="match status" value="1"/>
</dbReference>
<dbReference type="PANTHER" id="PTHR11360">
    <property type="entry name" value="MONOCARBOXYLATE TRANSPORTER"/>
    <property type="match status" value="1"/>
</dbReference>
<dbReference type="Pfam" id="PF07690">
    <property type="entry name" value="MFS_1"/>
    <property type="match status" value="1"/>
</dbReference>
<dbReference type="SUPFAM" id="SSF103473">
    <property type="entry name" value="MFS general substrate transporter"/>
    <property type="match status" value="1"/>
</dbReference>
<dbReference type="PROSITE" id="PS50850">
    <property type="entry name" value="MFS"/>
    <property type="match status" value="1"/>
</dbReference>
<proteinExistence type="evidence at transcript level"/>